<dbReference type="EMBL" id="AF457465">
    <property type="status" value="NOT_ANNOTATED_CDS"/>
    <property type="molecule type" value="Genomic_DNA"/>
</dbReference>
<dbReference type="EMBL" id="AJ620206">
    <property type="status" value="NOT_ANNOTATED_CDS"/>
    <property type="molecule type" value="Genomic_DNA"/>
</dbReference>
<dbReference type="SMR" id="P0DOD8"/>
<dbReference type="Proteomes" id="UP000008785">
    <property type="component" value="Genome"/>
</dbReference>
<dbReference type="Proteomes" id="UP000185273">
    <property type="component" value="Genome"/>
</dbReference>
<dbReference type="GO" id="GO:0042025">
    <property type="term" value="C:host cell nucleus"/>
    <property type="evidence" value="ECO:0007669"/>
    <property type="project" value="UniProtKB-SubCell"/>
</dbReference>
<dbReference type="GO" id="GO:0003677">
    <property type="term" value="F:DNA binding"/>
    <property type="evidence" value="ECO:0007669"/>
    <property type="project" value="InterPro"/>
</dbReference>
<dbReference type="GO" id="GO:0003700">
    <property type="term" value="F:DNA-binding transcription factor activity"/>
    <property type="evidence" value="ECO:0007669"/>
    <property type="project" value="InterPro"/>
</dbReference>
<dbReference type="GO" id="GO:0006275">
    <property type="term" value="P:regulation of DNA replication"/>
    <property type="evidence" value="ECO:0007669"/>
    <property type="project" value="InterPro"/>
</dbReference>
<dbReference type="Gene3D" id="3.30.70.330">
    <property type="match status" value="1"/>
</dbReference>
<dbReference type="InterPro" id="IPR035975">
    <property type="entry name" value="E2/EBNA1_C_sf"/>
</dbReference>
<dbReference type="InterPro" id="IPR012677">
    <property type="entry name" value="Nucleotide-bd_a/b_plait_sf"/>
</dbReference>
<dbReference type="InterPro" id="IPR000427">
    <property type="entry name" value="Papillomavirus_E2_C"/>
</dbReference>
<dbReference type="Pfam" id="PF00511">
    <property type="entry name" value="PPV_E2_C"/>
    <property type="match status" value="1"/>
</dbReference>
<dbReference type="SUPFAM" id="SSF54957">
    <property type="entry name" value="Viral DNA-binding domain"/>
    <property type="match status" value="1"/>
</dbReference>
<feature type="chain" id="PRO_0000438763" description="Protein E8^E2C">
    <location>
        <begin position="1"/>
        <end position="225"/>
    </location>
</feature>
<feature type="region of interest" description="Disordered" evidence="2">
    <location>
        <begin position="1"/>
        <end position="67"/>
    </location>
</feature>
<feature type="region of interest" description="Disordered" evidence="2">
    <location>
        <begin position="85"/>
        <end position="128"/>
    </location>
</feature>
<feature type="compositionally biased region" description="Low complexity" evidence="2">
    <location>
        <begin position="92"/>
        <end position="108"/>
    </location>
</feature>
<feature type="compositionally biased region" description="Basic and acidic residues" evidence="2">
    <location>
        <begin position="116"/>
        <end position="128"/>
    </location>
</feature>
<reference key="1">
    <citation type="journal article" date="2002" name="J. Virol.">
        <title>Lack of canonical E6 and E7 open reading frames in bird papillomaviruses: Fringilla coelebs papillomavirus and Psittacus erithacus timneh papillomavirus.</title>
        <authorList>
            <person name="Terai M."/>
            <person name="DeSalle R."/>
            <person name="Burk R.D."/>
        </authorList>
    </citation>
    <scope>NUCLEOTIDE SEQUENCE [GENOMIC DNA]</scope>
</reference>
<reference key="2">
    <citation type="submission" date="2004-01" db="EMBL/GenBank/DDBJ databases">
        <title>Sequencing of the complete genomes of BPV 3, BPV 5 and BPV 6.</title>
        <authorList>
            <person name="Delius H."/>
            <person name="de Villiers E.M."/>
        </authorList>
    </citation>
    <scope>NUCLEOTIDE SEQUENCE [GENOMIC DNA]</scope>
</reference>
<accession>P0DOD8</accession>
<organismHost>
    <name type="scientific">Bos taurus</name>
    <name type="common">Bovine</name>
    <dbReference type="NCBI Taxonomy" id="9913"/>
</organismHost>
<evidence type="ECO:0000250" key="1">
    <source>
        <dbReference type="UniProtKB" id="P0DKA0"/>
    </source>
</evidence>
<evidence type="ECO:0000256" key="2">
    <source>
        <dbReference type="SAM" id="MobiDB-lite"/>
    </source>
</evidence>
<evidence type="ECO:0000305" key="3"/>
<protein>
    <recommendedName>
        <fullName>Protein E8^E2C</fullName>
    </recommendedName>
</protein>
<sequence length="225" mass="24376">MKLVMLLRPPPQTHRADTTDGLPGLQEEPRGGDGPTCSGPAPAIPDSPSRCLSRGFAGRDPGCHRNRHRVHPYILSGGQRILVTSSSSSTVQGPLSSGSSQHSQSRGRPPSPDSTETERARTPVNSDRQRAGEFDLLKGGCRPCCLIEGNGNKVKCLRFRLKKSHRSRFLDITTTFWATGDEGSDRQGNGTILITFTDTTQRDLFLGSVSIPGELSVRRITISTD</sequence>
<keyword id="KW-1048">Host nucleus</keyword>
<keyword id="KW-1185">Reference proteome</keyword>
<comment type="function">
    <text evidence="1">Plays a role in limiting the replication of viral DNA in keratinocytes. Recruits the host NCoR/SMRT complex to viral replication foci to mediate repression of both viral replication and transcription.</text>
</comment>
<comment type="subcellular location">
    <subcellularLocation>
        <location evidence="1">Host nucleus</location>
    </subcellularLocation>
</comment>
<comment type="similarity">
    <text evidence="3">Belongs to the papillomaviridae E8^E2C protein family.</text>
</comment>
<name>VE8E2_BPV5</name>
<organism>
    <name type="scientific">Bovine papillomavirus type 5</name>
    <dbReference type="NCBI Taxonomy" id="2491661"/>
    <lineage>
        <taxon>Viruses</taxon>
        <taxon>Monodnaviria</taxon>
        <taxon>Shotokuvirae</taxon>
        <taxon>Cossaviricota</taxon>
        <taxon>Papovaviricetes</taxon>
        <taxon>Zurhausenvirales</taxon>
        <taxon>Papillomaviridae</taxon>
        <taxon>Firstpapillomavirinae</taxon>
        <taxon>Epsilonpapillomavirus</taxon>
        <taxon>Epsilonpapillomavirus 1</taxon>
    </lineage>
</organism>
<proteinExistence type="inferred from homology"/>